<organism>
    <name type="scientific">Pseudomonas aeruginosa (strain ATCC 15692 / DSM 22644 / CIP 104116 / JCM 14847 / LMG 12228 / 1C / PRS 101 / PAO1)</name>
    <dbReference type="NCBI Taxonomy" id="208964"/>
    <lineage>
        <taxon>Bacteria</taxon>
        <taxon>Pseudomonadati</taxon>
        <taxon>Pseudomonadota</taxon>
        <taxon>Gammaproteobacteria</taxon>
        <taxon>Pseudomonadales</taxon>
        <taxon>Pseudomonadaceae</taxon>
        <taxon>Pseudomonas</taxon>
    </lineage>
</organism>
<dbReference type="EC" id="2.8.1.12"/>
<dbReference type="EMBL" id="AE004091">
    <property type="protein sequence ID" value="AAG07303.1"/>
    <property type="molecule type" value="Genomic_DNA"/>
</dbReference>
<dbReference type="PIR" id="B83156">
    <property type="entry name" value="B83156"/>
</dbReference>
<dbReference type="RefSeq" id="NP_252605.1">
    <property type="nucleotide sequence ID" value="NC_002516.2"/>
</dbReference>
<dbReference type="RefSeq" id="WP_003093025.1">
    <property type="nucleotide sequence ID" value="NZ_QZGE01000001.1"/>
</dbReference>
<dbReference type="SMR" id="Q9HX97"/>
<dbReference type="FunCoup" id="Q9HX97">
    <property type="interactions" value="674"/>
</dbReference>
<dbReference type="STRING" id="208964.PA3916"/>
<dbReference type="PaxDb" id="208964-PA3916"/>
<dbReference type="GeneID" id="878985"/>
<dbReference type="KEGG" id="pae:PA3916"/>
<dbReference type="PATRIC" id="fig|208964.12.peg.4102"/>
<dbReference type="PseudoCAP" id="PA3916"/>
<dbReference type="HOGENOM" id="CLU_089568_2_1_6"/>
<dbReference type="InParanoid" id="Q9HX97"/>
<dbReference type="OrthoDB" id="9803224at2"/>
<dbReference type="PhylomeDB" id="Q9HX97"/>
<dbReference type="BioCyc" id="PAER208964:G1FZ6-3989-MONOMER"/>
<dbReference type="UniPathway" id="UPA00344"/>
<dbReference type="Proteomes" id="UP000002438">
    <property type="component" value="Chromosome"/>
</dbReference>
<dbReference type="GO" id="GO:0005829">
    <property type="term" value="C:cytosol"/>
    <property type="evidence" value="ECO:0000318"/>
    <property type="project" value="GO_Central"/>
</dbReference>
<dbReference type="GO" id="GO:0030366">
    <property type="term" value="F:molybdopterin synthase activity"/>
    <property type="evidence" value="ECO:0007669"/>
    <property type="project" value="UniProtKB-EC"/>
</dbReference>
<dbReference type="GO" id="GO:0006777">
    <property type="term" value="P:Mo-molybdopterin cofactor biosynthetic process"/>
    <property type="evidence" value="ECO:0007669"/>
    <property type="project" value="UniProtKB-KW"/>
</dbReference>
<dbReference type="CDD" id="cd00756">
    <property type="entry name" value="MoaE"/>
    <property type="match status" value="1"/>
</dbReference>
<dbReference type="FunFam" id="3.90.1170.40:FF:000001">
    <property type="entry name" value="Molybdopterin synthase catalytic subunit MoaE"/>
    <property type="match status" value="1"/>
</dbReference>
<dbReference type="Gene3D" id="3.90.1170.40">
    <property type="entry name" value="Molybdopterin biosynthesis MoaE subunit"/>
    <property type="match status" value="1"/>
</dbReference>
<dbReference type="InterPro" id="IPR036563">
    <property type="entry name" value="MoaE_sf"/>
</dbReference>
<dbReference type="InterPro" id="IPR003448">
    <property type="entry name" value="Mopterin_biosynth_MoaE"/>
</dbReference>
<dbReference type="NCBIfam" id="NF007959">
    <property type="entry name" value="PRK10678.1"/>
    <property type="match status" value="1"/>
</dbReference>
<dbReference type="PANTHER" id="PTHR23404">
    <property type="entry name" value="MOLYBDOPTERIN SYNTHASE RELATED"/>
    <property type="match status" value="1"/>
</dbReference>
<dbReference type="Pfam" id="PF02391">
    <property type="entry name" value="MoaE"/>
    <property type="match status" value="1"/>
</dbReference>
<dbReference type="SUPFAM" id="SSF54690">
    <property type="entry name" value="Molybdopterin synthase subunit MoaE"/>
    <property type="match status" value="1"/>
</dbReference>
<feature type="chain" id="PRO_0000163090" description="Molybdopterin synthase catalytic subunit">
    <location>
        <begin position="1"/>
        <end position="150"/>
    </location>
</feature>
<feature type="binding site" evidence="1">
    <location>
        <begin position="35"/>
        <end position="37"/>
    </location>
    <ligand>
        <name>substrate</name>
    </ligand>
</feature>
<feature type="binding site" evidence="1">
    <location>
        <begin position="101"/>
        <end position="102"/>
    </location>
    <ligand>
        <name>substrate</name>
    </ligand>
</feature>
<feature type="binding site" evidence="1">
    <location>
        <position position="117"/>
    </location>
    <ligand>
        <name>substrate</name>
    </ligand>
</feature>
<feature type="binding site" evidence="1">
    <location>
        <begin position="124"/>
        <end position="126"/>
    </location>
    <ligand>
        <name>substrate</name>
    </ligand>
</feature>
<gene>
    <name type="primary">moaE</name>
    <name type="ordered locus">PA3916</name>
</gene>
<name>MOAE_PSEAE</name>
<evidence type="ECO:0000250" key="1"/>
<evidence type="ECO:0000305" key="2"/>
<sequence length="150" mass="16686">MAIRVQQAAFDPGQELNALHAQNVGIGAVVGFVGYVRDFNDGREVGGMFLEHYPGMTEKALGKIAAEAGQRWPLLRLEILHRIGRLEPGEPIVFVGCASAHRQAAFDACNFVMDYLKTRAPFWKKEDTAEGPRWVEGRCSDQAAAQRWEE</sequence>
<comment type="function">
    <text evidence="1">Converts molybdopterin precursor Z into molybdopterin. This requires the incorporation of two sulfur atoms into precursor Z to generate a dithiolene group. The sulfur is provided by MoaD (By similarity).</text>
</comment>
<comment type="catalytic activity">
    <reaction>
        <text>2 [molybdopterin-synthase sulfur-carrier protein]-C-terminal-Gly-aminoethanethioate + cyclic pyranopterin phosphate + H2O = molybdopterin + 2 [molybdopterin-synthase sulfur-carrier protein]-C-terminal Gly-Gly + 2 H(+)</text>
        <dbReference type="Rhea" id="RHEA:26333"/>
        <dbReference type="Rhea" id="RHEA-COMP:12202"/>
        <dbReference type="Rhea" id="RHEA-COMP:19907"/>
        <dbReference type="ChEBI" id="CHEBI:15377"/>
        <dbReference type="ChEBI" id="CHEBI:15378"/>
        <dbReference type="ChEBI" id="CHEBI:58698"/>
        <dbReference type="ChEBI" id="CHEBI:59648"/>
        <dbReference type="ChEBI" id="CHEBI:90778"/>
        <dbReference type="ChEBI" id="CHEBI:232372"/>
        <dbReference type="EC" id="2.8.1.12"/>
    </reaction>
</comment>
<comment type="pathway">
    <text>Cofactor biosynthesis; molybdopterin biosynthesis.</text>
</comment>
<comment type="subunit">
    <text evidence="1">Heterotetramer of 2 MoaD subunits and 2 MoaE subunits. Also stable as homodimer. The enzyme changes between these two forms during catalysis (By similarity).</text>
</comment>
<comment type="similarity">
    <text evidence="2">Belongs to the MoaE family.</text>
</comment>
<accession>Q9HX97</accession>
<protein>
    <recommendedName>
        <fullName>Molybdopterin synthase catalytic subunit</fullName>
        <ecNumber>2.8.1.12</ecNumber>
    </recommendedName>
    <alternativeName>
        <fullName>MPT synthase subunit 2</fullName>
    </alternativeName>
    <alternativeName>
        <fullName>Molybdenum cofactor biosynthesis protein E</fullName>
    </alternativeName>
    <alternativeName>
        <fullName>Molybdopterin-converting factor large subunit</fullName>
    </alternativeName>
    <alternativeName>
        <fullName>Molybdopterin-converting factor subunit 2</fullName>
    </alternativeName>
</protein>
<reference key="1">
    <citation type="journal article" date="2000" name="Nature">
        <title>Complete genome sequence of Pseudomonas aeruginosa PAO1, an opportunistic pathogen.</title>
        <authorList>
            <person name="Stover C.K."/>
            <person name="Pham X.-Q.T."/>
            <person name="Erwin A.L."/>
            <person name="Mizoguchi S.D."/>
            <person name="Warrener P."/>
            <person name="Hickey M.J."/>
            <person name="Brinkman F.S.L."/>
            <person name="Hufnagle W.O."/>
            <person name="Kowalik D.J."/>
            <person name="Lagrou M."/>
            <person name="Garber R.L."/>
            <person name="Goltry L."/>
            <person name="Tolentino E."/>
            <person name="Westbrock-Wadman S."/>
            <person name="Yuan Y."/>
            <person name="Brody L.L."/>
            <person name="Coulter S.N."/>
            <person name="Folger K.R."/>
            <person name="Kas A."/>
            <person name="Larbig K."/>
            <person name="Lim R.M."/>
            <person name="Smith K.A."/>
            <person name="Spencer D.H."/>
            <person name="Wong G.K.-S."/>
            <person name="Wu Z."/>
            <person name="Paulsen I.T."/>
            <person name="Reizer J."/>
            <person name="Saier M.H. Jr."/>
            <person name="Hancock R.E.W."/>
            <person name="Lory S."/>
            <person name="Olson M.V."/>
        </authorList>
    </citation>
    <scope>NUCLEOTIDE SEQUENCE [LARGE SCALE GENOMIC DNA]</scope>
    <source>
        <strain>ATCC 15692 / DSM 22644 / CIP 104116 / JCM 14847 / LMG 12228 / 1C / PRS 101 / PAO1</strain>
    </source>
</reference>
<keyword id="KW-0501">Molybdenum cofactor biosynthesis</keyword>
<keyword id="KW-1185">Reference proteome</keyword>
<keyword id="KW-0808">Transferase</keyword>
<proteinExistence type="inferred from homology"/>